<keyword id="KW-0997">Cell inner membrane</keyword>
<keyword id="KW-1003">Cell membrane</keyword>
<keyword id="KW-0448">Lipopolysaccharide biosynthesis</keyword>
<keyword id="KW-0472">Membrane</keyword>
<keyword id="KW-0735">Signal-anchor</keyword>
<keyword id="KW-0808">Transferase</keyword>
<keyword id="KW-0812">Transmembrane</keyword>
<keyword id="KW-1133">Transmembrane helix</keyword>
<organism>
    <name type="scientific">Chlamydia trachomatis serovar A (strain ATCC VR-571B / DSM 19440 / HAR-13)</name>
    <dbReference type="NCBI Taxonomy" id="315277"/>
    <lineage>
        <taxon>Bacteria</taxon>
        <taxon>Pseudomonadati</taxon>
        <taxon>Chlamydiota</taxon>
        <taxon>Chlamydiia</taxon>
        <taxon>Chlamydiales</taxon>
        <taxon>Chlamydiaceae</taxon>
        <taxon>Chlamydia/Chlamydophila group</taxon>
        <taxon>Chlamydia</taxon>
    </lineage>
</organism>
<proteinExistence type="inferred from homology"/>
<reference key="1">
    <citation type="journal article" date="1994" name="Microb. Pathog.">
        <title>Nucleotide sequence variations within the lipopolysaccharide biosynthesis gene gseA (Kdo transferase) among the Chlamydia trachomatis serovars.</title>
        <authorList>
            <person name="Mamat U."/>
            <person name="Loebau S."/>
            <person name="Persson K."/>
            <person name="Brade H."/>
        </authorList>
    </citation>
    <scope>NUCLEOTIDE SEQUENCE [GENOMIC DNA]</scope>
</reference>
<reference key="2">
    <citation type="journal article" date="2005" name="Infect. Immun.">
        <title>Comparative genomic analysis of Chlamydia trachomatis oculotropic and genitotropic strains.</title>
        <authorList>
            <person name="Carlson J.H."/>
            <person name="Porcella S.F."/>
            <person name="McClarty G."/>
            <person name="Caldwell H.D."/>
        </authorList>
    </citation>
    <scope>NUCLEOTIDE SEQUENCE [LARGE SCALE GENOMIC DNA]</scope>
    <source>
        <strain>ATCC VR-571B / DSM 19440 / HAR-13</strain>
    </source>
</reference>
<gene>
    <name type="primary">waaA</name>
    <name type="synonym">gseA</name>
    <name type="synonym">kdtA</name>
    <name type="ordered locus">CTA_0228</name>
</gene>
<feature type="chain" id="PRO_0000080285" description="3-deoxy-D-manno-octulosonic acid transferase">
    <location>
        <begin position="1"/>
        <end position="431"/>
    </location>
</feature>
<feature type="transmembrane region" description="Helical; Signal-anchor" evidence="3">
    <location>
        <begin position="5"/>
        <end position="27"/>
    </location>
</feature>
<feature type="active site" description="Proton acceptor" evidence="1">
    <location>
        <position position="67"/>
    </location>
</feature>
<feature type="binding site" evidence="1">
    <location>
        <begin position="275"/>
        <end position="276"/>
    </location>
    <ligand>
        <name>CMP</name>
        <dbReference type="ChEBI" id="CHEBI:60377"/>
    </ligand>
</feature>
<feature type="binding site" evidence="1">
    <location>
        <begin position="315"/>
        <end position="317"/>
    </location>
    <ligand>
        <name>CMP</name>
        <dbReference type="ChEBI" id="CHEBI:60377"/>
    </ligand>
</feature>
<feature type="binding site" evidence="1">
    <location>
        <begin position="342"/>
        <end position="345"/>
    </location>
    <ligand>
        <name>CMP</name>
        <dbReference type="ChEBI" id="CHEBI:60377"/>
    </ligand>
</feature>
<feature type="site" description="Transition state stabilizer" evidence="1">
    <location>
        <position position="138"/>
    </location>
</feature>
<feature type="site" description="Transition state stabilizer" evidence="1">
    <location>
        <position position="216"/>
    </location>
</feature>
<evidence type="ECO:0000250" key="1"/>
<evidence type="ECO:0000250" key="2">
    <source>
        <dbReference type="UniProtKB" id="Q46222"/>
    </source>
</evidence>
<evidence type="ECO:0000255" key="3"/>
<evidence type="ECO:0000305" key="4"/>
<name>KDTA_CHLTA</name>
<comment type="function">
    <text evidence="2">Involved in lipopolysaccharide (LPS) biosynthesis. Catalyzes the transfer of three 3-deoxy-D-manno-octulosonate (Kdo) residues from CMP-Kdo to lipid IV(A), the tetraacyldisaccharide-1,4'-bisphosphate precursor of lipid A. Thus generates the genus-specific LPS epitope of Chlamydia, composed of the trisaccharide alpha-Kdo-(2-&gt;8)-alpha-Kdo-(2-&gt;4)-alpha-Kdo.</text>
</comment>
<comment type="catalytic activity">
    <reaction>
        <text>lipid IVA (E. coli) + CMP-3-deoxy-beta-D-manno-octulosonate = alpha-Kdo-(2-&gt;6)-lipid IVA (E. coli) + CMP + H(+)</text>
        <dbReference type="Rhea" id="RHEA:28066"/>
        <dbReference type="ChEBI" id="CHEBI:15378"/>
        <dbReference type="ChEBI" id="CHEBI:58603"/>
        <dbReference type="ChEBI" id="CHEBI:60364"/>
        <dbReference type="ChEBI" id="CHEBI:60377"/>
        <dbReference type="ChEBI" id="CHEBI:85987"/>
        <dbReference type="EC" id="2.4.99.12"/>
    </reaction>
</comment>
<comment type="catalytic activity">
    <reaction>
        <text>alpha-Kdo-(2-&gt;6)-lipid IVA (E. coli) + CMP-3-deoxy-beta-D-manno-octulosonate = alpha-Kdo-(2-&gt;4)-alpha-Kdo-(2-&gt;6)-lipid IVA (E. coli) + CMP + H(+)</text>
        <dbReference type="Rhea" id="RHEA:28062"/>
        <dbReference type="ChEBI" id="CHEBI:15378"/>
        <dbReference type="ChEBI" id="CHEBI:60364"/>
        <dbReference type="ChEBI" id="CHEBI:60365"/>
        <dbReference type="ChEBI" id="CHEBI:60377"/>
        <dbReference type="ChEBI" id="CHEBI:85987"/>
        <dbReference type="EC" id="2.4.99.13"/>
    </reaction>
</comment>
<comment type="catalytic activity">
    <reaction>
        <text>alpha-Kdo-(2-&gt;4)-alpha-Kdo-(2-&gt;6)-lipid IVA (E. coli) + CMP-3-deoxy-beta-D-manno-octulosonate = alpha-Kdo-(2-&gt;8)-alpha-Kdo-(2-&gt;4)-alpha-Kdo-(2-&gt;6)-lipid IVA (E. coli) + CMP + H(+)</text>
        <dbReference type="Rhea" id="RHEA:28154"/>
        <dbReference type="ChEBI" id="CHEBI:15378"/>
        <dbReference type="ChEBI" id="CHEBI:60365"/>
        <dbReference type="ChEBI" id="CHEBI:60377"/>
        <dbReference type="ChEBI" id="CHEBI:85987"/>
        <dbReference type="ChEBI" id="CHEBI:86234"/>
        <dbReference type="EC" id="2.4.99.14"/>
    </reaction>
</comment>
<comment type="pathway">
    <text>Bacterial outer membrane biogenesis; LPS core biosynthesis.</text>
</comment>
<comment type="subcellular location">
    <subcellularLocation>
        <location evidence="1">Cell inner membrane</location>
        <topology evidence="1">Single-pass membrane protein</topology>
        <orientation evidence="1">Cytoplasmic side</orientation>
    </subcellularLocation>
</comment>
<comment type="similarity">
    <text evidence="4">Belongs to the glycosyltransferase group 1 family. Glycosyltransferase 30 subfamily.</text>
</comment>
<accession>Q3KMF4</accession>
<accession>Q46394</accession>
<accession>Q46395</accession>
<accession>Q46396</accession>
<accession>Q46401</accession>
<accession>Q57440</accession>
<sequence length="431" mass="49465">MIRRWLTSRLYDAFLVCAFFVSAPRIFYKVFFHGKYIDSWKIRFGVQKPFVKGEGPLVWFHGASVGEVSLLAPLLNRWREEFPEWRFVVTTCSEAGVHTARRLYESLGATVFVLPLDLSCIIKSVVRKLAPDIVIFSEGDCWLHFLTESKRLGAKAFLINGKLSEHSCKRFSFLKRLGRNYFAPLDLLILQDELYKQRFMQIGISSDKIHVTGNMKTFIESSLATNRRDFWRAKLQISSQDRLIVLGSVHPKDVEVWAEVVSHFHNSSTKILWVPRHLEKLKEHAKLLEKAGILFGLWSQGASFRQYNSLIMDAMGVLKDIYSAADIAFVGGTFDPSVGGHNLLEPLQKEVPLMFGPYIYSQSVLAEKLREKEAGLSVNKETLLDVVTDLLQNEKNRQAYIEKGKSFLKQEENSFQQTWEILKSQITCMKI</sequence>
<protein>
    <recommendedName>
        <fullName>3-deoxy-D-manno-octulosonic acid transferase</fullName>
        <shortName>Kdo transferase</shortName>
        <ecNumber>2.4.99.12</ecNumber>
        <ecNumber>2.4.99.13</ecNumber>
        <ecNumber>2.4.99.14</ecNumber>
    </recommendedName>
    <alternativeName>
        <fullName>Kdo(2)-lipid IV(A) 3-deoxy-D-manno-octulosonic acid transferase</fullName>
    </alternativeName>
    <alternativeName>
        <fullName>Kdo-lipid IV(A) 3-deoxy-D-manno-octulosonic acid transferase</fullName>
    </alternativeName>
    <alternativeName>
        <fullName>Lipid IV(A) 3-deoxy-D-manno-octulosonic acid transferase</fullName>
    </alternativeName>
</protein>
<dbReference type="EC" id="2.4.99.12"/>
<dbReference type="EC" id="2.4.99.13"/>
<dbReference type="EC" id="2.4.99.14"/>
<dbReference type="EMBL" id="Z22652">
    <property type="protein sequence ID" value="CAA80367.1"/>
    <property type="molecule type" value="Genomic_DNA"/>
</dbReference>
<dbReference type="EMBL" id="CP000051">
    <property type="protein sequence ID" value="AAX50468.1"/>
    <property type="molecule type" value="Genomic_DNA"/>
</dbReference>
<dbReference type="PIR" id="I40894">
    <property type="entry name" value="I40894"/>
</dbReference>
<dbReference type="RefSeq" id="WP_011324640.1">
    <property type="nucleotide sequence ID" value="NC_007429.1"/>
</dbReference>
<dbReference type="SMR" id="Q3KMF4"/>
<dbReference type="CAZy" id="GT30">
    <property type="family name" value="Glycosyltransferase Family 30"/>
</dbReference>
<dbReference type="KEGG" id="cta:CTA_0228"/>
<dbReference type="HOGENOM" id="CLU_036146_2_0_0"/>
<dbReference type="UniPathway" id="UPA00958"/>
<dbReference type="Proteomes" id="UP000002532">
    <property type="component" value="Chromosome"/>
</dbReference>
<dbReference type="GO" id="GO:0005886">
    <property type="term" value="C:plasma membrane"/>
    <property type="evidence" value="ECO:0007669"/>
    <property type="project" value="UniProtKB-SubCell"/>
</dbReference>
<dbReference type="GO" id="GO:0043842">
    <property type="term" value="F:Kdo transferase activity"/>
    <property type="evidence" value="ECO:0007669"/>
    <property type="project" value="UniProtKB-EC"/>
</dbReference>
<dbReference type="GO" id="GO:0009245">
    <property type="term" value="P:lipid A biosynthetic process"/>
    <property type="evidence" value="ECO:0007669"/>
    <property type="project" value="TreeGrafter"/>
</dbReference>
<dbReference type="GO" id="GO:0009244">
    <property type="term" value="P:lipopolysaccharide core region biosynthetic process"/>
    <property type="evidence" value="ECO:0007669"/>
    <property type="project" value="UniProtKB-UniPathway"/>
</dbReference>
<dbReference type="Gene3D" id="3.40.50.11720">
    <property type="entry name" value="3-Deoxy-D-manno-octulosonic-acid transferase, N-terminal domain"/>
    <property type="match status" value="1"/>
</dbReference>
<dbReference type="Gene3D" id="3.40.50.2000">
    <property type="entry name" value="Glycogen Phosphorylase B"/>
    <property type="match status" value="1"/>
</dbReference>
<dbReference type="InterPro" id="IPR007507">
    <property type="entry name" value="Glycos_transf_N"/>
</dbReference>
<dbReference type="InterPro" id="IPR038107">
    <property type="entry name" value="Glycos_transf_N_sf"/>
</dbReference>
<dbReference type="InterPro" id="IPR039901">
    <property type="entry name" value="Kdotransferase"/>
</dbReference>
<dbReference type="NCBIfam" id="NF004389">
    <property type="entry name" value="PRK05749.1-5"/>
    <property type="match status" value="1"/>
</dbReference>
<dbReference type="PANTHER" id="PTHR42755:SF1">
    <property type="entry name" value="3-DEOXY-D-MANNO-OCTULOSONIC ACID TRANSFERASE, MITOCHONDRIAL-RELATED"/>
    <property type="match status" value="1"/>
</dbReference>
<dbReference type="PANTHER" id="PTHR42755">
    <property type="entry name" value="3-DEOXY-MANNO-OCTULOSONATE CYTIDYLYLTRANSFERASE"/>
    <property type="match status" value="1"/>
</dbReference>
<dbReference type="Pfam" id="PF04413">
    <property type="entry name" value="Glycos_transf_N"/>
    <property type="match status" value="1"/>
</dbReference>
<dbReference type="SUPFAM" id="SSF53756">
    <property type="entry name" value="UDP-Glycosyltransferase/glycogen phosphorylase"/>
    <property type="match status" value="1"/>
</dbReference>